<gene>
    <name evidence="1" type="primary">rplY</name>
    <name evidence="1" type="synonym">ctc</name>
    <name type="ordered locus">RPE_1437</name>
</gene>
<keyword id="KW-0687">Ribonucleoprotein</keyword>
<keyword id="KW-0689">Ribosomal protein</keyword>
<keyword id="KW-0694">RNA-binding</keyword>
<keyword id="KW-0699">rRNA-binding</keyword>
<dbReference type="EMBL" id="CP000463">
    <property type="protein sequence ID" value="ABJ05387.1"/>
    <property type="molecule type" value="Genomic_DNA"/>
</dbReference>
<dbReference type="SMR" id="Q07RP7"/>
<dbReference type="STRING" id="316055.RPE_1437"/>
<dbReference type="KEGG" id="rpe:RPE_1437"/>
<dbReference type="eggNOG" id="COG1825">
    <property type="taxonomic scope" value="Bacteria"/>
</dbReference>
<dbReference type="HOGENOM" id="CLU_075939_0_0_5"/>
<dbReference type="OrthoDB" id="9806411at2"/>
<dbReference type="GO" id="GO:0022625">
    <property type="term" value="C:cytosolic large ribosomal subunit"/>
    <property type="evidence" value="ECO:0007669"/>
    <property type="project" value="TreeGrafter"/>
</dbReference>
<dbReference type="GO" id="GO:0008097">
    <property type="term" value="F:5S rRNA binding"/>
    <property type="evidence" value="ECO:0007669"/>
    <property type="project" value="InterPro"/>
</dbReference>
<dbReference type="GO" id="GO:0003735">
    <property type="term" value="F:structural constituent of ribosome"/>
    <property type="evidence" value="ECO:0007669"/>
    <property type="project" value="InterPro"/>
</dbReference>
<dbReference type="GO" id="GO:0006412">
    <property type="term" value="P:translation"/>
    <property type="evidence" value="ECO:0007669"/>
    <property type="project" value="UniProtKB-UniRule"/>
</dbReference>
<dbReference type="CDD" id="cd00495">
    <property type="entry name" value="Ribosomal_L25_TL5_CTC"/>
    <property type="match status" value="1"/>
</dbReference>
<dbReference type="Gene3D" id="2.170.120.20">
    <property type="entry name" value="Ribosomal protein L25, beta domain"/>
    <property type="match status" value="1"/>
</dbReference>
<dbReference type="Gene3D" id="2.40.240.10">
    <property type="entry name" value="Ribosomal Protein L25, Chain P"/>
    <property type="match status" value="1"/>
</dbReference>
<dbReference type="HAMAP" id="MF_01334">
    <property type="entry name" value="Ribosomal_bL25_CTC"/>
    <property type="match status" value="1"/>
</dbReference>
<dbReference type="InterPro" id="IPR020056">
    <property type="entry name" value="Rbsml_bL25/Gln-tRNA_synth_N"/>
</dbReference>
<dbReference type="InterPro" id="IPR011035">
    <property type="entry name" value="Ribosomal_bL25/Gln-tRNA_synth"/>
</dbReference>
<dbReference type="InterPro" id="IPR020057">
    <property type="entry name" value="Ribosomal_bL25_b-dom"/>
</dbReference>
<dbReference type="InterPro" id="IPR037121">
    <property type="entry name" value="Ribosomal_bL25_C"/>
</dbReference>
<dbReference type="InterPro" id="IPR001021">
    <property type="entry name" value="Ribosomal_bL25_long"/>
</dbReference>
<dbReference type="InterPro" id="IPR029751">
    <property type="entry name" value="Ribosomal_L25_dom"/>
</dbReference>
<dbReference type="InterPro" id="IPR020930">
    <property type="entry name" value="Ribosomal_uL5_bac-type"/>
</dbReference>
<dbReference type="NCBIfam" id="TIGR00731">
    <property type="entry name" value="bL25_bact_ctc"/>
    <property type="match status" value="1"/>
</dbReference>
<dbReference type="NCBIfam" id="NF004128">
    <property type="entry name" value="PRK05618.1-2"/>
    <property type="match status" value="1"/>
</dbReference>
<dbReference type="PANTHER" id="PTHR33284">
    <property type="entry name" value="RIBOSOMAL PROTEIN L25/GLN-TRNA SYNTHETASE, ANTI-CODON-BINDING DOMAIN-CONTAINING PROTEIN"/>
    <property type="match status" value="1"/>
</dbReference>
<dbReference type="PANTHER" id="PTHR33284:SF1">
    <property type="entry name" value="RIBOSOMAL PROTEIN L25_GLN-TRNA SYNTHETASE, ANTI-CODON-BINDING DOMAIN-CONTAINING PROTEIN"/>
    <property type="match status" value="1"/>
</dbReference>
<dbReference type="Pfam" id="PF01386">
    <property type="entry name" value="Ribosomal_L25p"/>
    <property type="match status" value="1"/>
</dbReference>
<dbReference type="Pfam" id="PF14693">
    <property type="entry name" value="Ribosomal_TL5_C"/>
    <property type="match status" value="1"/>
</dbReference>
<dbReference type="SUPFAM" id="SSF50715">
    <property type="entry name" value="Ribosomal protein L25-like"/>
    <property type="match status" value="1"/>
</dbReference>
<evidence type="ECO:0000255" key="1">
    <source>
        <dbReference type="HAMAP-Rule" id="MF_01334"/>
    </source>
</evidence>
<evidence type="ECO:0000305" key="2"/>
<reference key="1">
    <citation type="submission" date="2006-09" db="EMBL/GenBank/DDBJ databases">
        <title>Complete sequence of Rhodopseudomonas palustris BisA53.</title>
        <authorList>
            <consortium name="US DOE Joint Genome Institute"/>
            <person name="Copeland A."/>
            <person name="Lucas S."/>
            <person name="Lapidus A."/>
            <person name="Barry K."/>
            <person name="Detter J.C."/>
            <person name="Glavina del Rio T."/>
            <person name="Hammon N."/>
            <person name="Israni S."/>
            <person name="Dalin E."/>
            <person name="Tice H."/>
            <person name="Pitluck S."/>
            <person name="Chain P."/>
            <person name="Malfatti S."/>
            <person name="Shin M."/>
            <person name="Vergez L."/>
            <person name="Schmutz J."/>
            <person name="Larimer F."/>
            <person name="Land M."/>
            <person name="Hauser L."/>
            <person name="Pelletier D.A."/>
            <person name="Kyrpides N."/>
            <person name="Kim E."/>
            <person name="Harwood C.S."/>
            <person name="Oda Y."/>
            <person name="Richardson P."/>
        </authorList>
    </citation>
    <scope>NUCLEOTIDE SEQUENCE [LARGE SCALE GENOMIC DNA]</scope>
    <source>
        <strain>BisA53</strain>
    </source>
</reference>
<comment type="function">
    <text evidence="1">This is one of the proteins that binds to the 5S RNA in the ribosome where it forms part of the central protuberance.</text>
</comment>
<comment type="subunit">
    <text evidence="1">Part of the 50S ribosomal subunit; part of the 5S rRNA/L5/L18/L25 subcomplex. Contacts the 5S rRNA. Binds to the 5S rRNA independently of L5 and L18.</text>
</comment>
<comment type="similarity">
    <text evidence="1">Belongs to the bacterial ribosomal protein bL25 family. CTC subfamily.</text>
</comment>
<organism>
    <name type="scientific">Rhodopseudomonas palustris (strain BisA53)</name>
    <dbReference type="NCBI Taxonomy" id="316055"/>
    <lineage>
        <taxon>Bacteria</taxon>
        <taxon>Pseudomonadati</taxon>
        <taxon>Pseudomonadota</taxon>
        <taxon>Alphaproteobacteria</taxon>
        <taxon>Hyphomicrobiales</taxon>
        <taxon>Nitrobacteraceae</taxon>
        <taxon>Rhodopseudomonas</taxon>
    </lineage>
</organism>
<accession>Q07RP7</accession>
<name>RL25_RHOP5</name>
<proteinExistence type="inferred from homology"/>
<protein>
    <recommendedName>
        <fullName evidence="1">Large ribosomal subunit protein bL25</fullName>
    </recommendedName>
    <alternativeName>
        <fullName evidence="2">50S ribosomal protein L25</fullName>
    </alternativeName>
    <alternativeName>
        <fullName evidence="1">General stress protein CTC</fullName>
    </alternativeName>
</protein>
<sequence>MATVKELKATARPSVGKGAARAERRAGRVPAVIYGDNKPPVTISLEDRELRLRILAGRFLTTVVDLDLDGTKHRVIPRDFHLDPVRDFPVHVDFLRLGEGATIRVSVPLHLKNSETAPGVKRGGTVNIVTHTVDLEAEADSIPQFIEADIGTLDIGTSLHLSDVVLPKGVKLVAAREDVTLVTIVPPSGFNEEQKAAAGAPAAAAPAAAAKAPAAGAKAPAAAAKAPAAPAKKK</sequence>
<feature type="chain" id="PRO_1000052925" description="Large ribosomal subunit protein bL25">
    <location>
        <begin position="1"/>
        <end position="234"/>
    </location>
</feature>